<evidence type="ECO:0000250" key="1"/>
<evidence type="ECO:0000250" key="2">
    <source>
        <dbReference type="UniProtKB" id="P68137"/>
    </source>
</evidence>
<evidence type="ECO:0000305" key="3"/>
<comment type="function">
    <text>Actins are highly conserved proteins that are involved in various types of cell motility and are ubiquitously expressed in all eukaryotic cells.</text>
</comment>
<comment type="catalytic activity">
    <reaction evidence="2">
        <text>ATP + H2O = ADP + phosphate + H(+)</text>
        <dbReference type="Rhea" id="RHEA:13065"/>
        <dbReference type="ChEBI" id="CHEBI:15377"/>
        <dbReference type="ChEBI" id="CHEBI:15378"/>
        <dbReference type="ChEBI" id="CHEBI:30616"/>
        <dbReference type="ChEBI" id="CHEBI:43474"/>
        <dbReference type="ChEBI" id="CHEBI:456216"/>
    </reaction>
</comment>
<comment type="subcellular location">
    <subcellularLocation>
        <location>Cytoplasm</location>
        <location>Cytoskeleton</location>
    </subcellularLocation>
</comment>
<comment type="PTM">
    <text evidence="1">Oxidation of Met-45 to form methionine sulfoxide promotes actin filament depolymerization. Methionine sulfoxide is produced stereospecifically, but it is not known whether the (S)-S-oxide or the (R)-S-oxide is produced (By similarity).</text>
</comment>
<comment type="similarity">
    <text evidence="3">Belongs to the actin family.</text>
</comment>
<keyword id="KW-0002">3D-structure</keyword>
<keyword id="KW-0007">Acetylation</keyword>
<keyword id="KW-0067">ATP-binding</keyword>
<keyword id="KW-0963">Cytoplasm</keyword>
<keyword id="KW-0206">Cytoskeleton</keyword>
<keyword id="KW-0378">Hydrolase</keyword>
<keyword id="KW-0547">Nucleotide-binding</keyword>
<keyword id="KW-0558">Oxidation</keyword>
<dbReference type="EC" id="3.6.4.-" evidence="2"/>
<dbReference type="EMBL" id="Z38130">
    <property type="protein sequence ID" value="CAA86290.1"/>
    <property type="molecule type" value="mRNA"/>
</dbReference>
<dbReference type="PIR" id="S49480">
    <property type="entry name" value="S49480"/>
</dbReference>
<dbReference type="RefSeq" id="XP_013788449.1">
    <property type="nucleotide sequence ID" value="XM_013932995.2"/>
</dbReference>
<dbReference type="RefSeq" id="XP_013790276.1">
    <property type="nucleotide sequence ID" value="XM_013934822.2"/>
</dbReference>
<dbReference type="RefSeq" id="XP_022243699.1">
    <property type="nucleotide sequence ID" value="XM_022387991.1"/>
</dbReference>
<dbReference type="PDB" id="3B63">
    <property type="method" value="EM"/>
    <property type="chains" value="A/C/G/I/L/M=7-371, B/E/H/J/K/N=8-371, D=8-365, F=8-363"/>
</dbReference>
<dbReference type="PDBsum" id="3B63"/>
<dbReference type="SMR" id="P41340"/>
<dbReference type="EnsemblMetazoa" id="XM_013932995.2">
    <property type="protein sequence ID" value="XP_013788449.1"/>
    <property type="gene ID" value="LOC106472357"/>
</dbReference>
<dbReference type="EnsemblMetazoa" id="XM_013934822.2">
    <property type="protein sequence ID" value="XP_013790276.1"/>
    <property type="gene ID" value="LOC106474132"/>
</dbReference>
<dbReference type="EnsemblMetazoa" id="XM_022387991.1">
    <property type="protein sequence ID" value="XP_022243699.1"/>
    <property type="gene ID" value="LOC106461112"/>
</dbReference>
<dbReference type="GeneID" id="106461112"/>
<dbReference type="GeneID" id="106472357"/>
<dbReference type="GeneID" id="106474132"/>
<dbReference type="KEGG" id="lpol:106472357"/>
<dbReference type="KEGG" id="lpol:106474132"/>
<dbReference type="OrthoDB" id="6407219at2759"/>
<dbReference type="EvolutionaryTrace" id="P41340"/>
<dbReference type="Proteomes" id="UP000694941">
    <property type="component" value="Unplaced"/>
</dbReference>
<dbReference type="GO" id="GO:0005737">
    <property type="term" value="C:cytoplasm"/>
    <property type="evidence" value="ECO:0007669"/>
    <property type="project" value="UniProtKB-KW"/>
</dbReference>
<dbReference type="GO" id="GO:0005856">
    <property type="term" value="C:cytoskeleton"/>
    <property type="evidence" value="ECO:0007669"/>
    <property type="project" value="UniProtKB-SubCell"/>
</dbReference>
<dbReference type="GO" id="GO:0005524">
    <property type="term" value="F:ATP binding"/>
    <property type="evidence" value="ECO:0007669"/>
    <property type="project" value="UniProtKB-KW"/>
</dbReference>
<dbReference type="GO" id="GO:0016787">
    <property type="term" value="F:hydrolase activity"/>
    <property type="evidence" value="ECO:0007669"/>
    <property type="project" value="UniProtKB-KW"/>
</dbReference>
<dbReference type="CDD" id="cd10224">
    <property type="entry name" value="ASKHA_NBD_actin"/>
    <property type="match status" value="1"/>
</dbReference>
<dbReference type="FunFam" id="2.30.36.70:FF:000001">
    <property type="entry name" value="Actin, alpha skeletal muscle"/>
    <property type="match status" value="1"/>
</dbReference>
<dbReference type="FunFam" id="3.30.420.40:FF:000131">
    <property type="entry name" value="Actin, alpha skeletal muscle"/>
    <property type="match status" value="1"/>
</dbReference>
<dbReference type="FunFam" id="3.30.420.40:FF:000291">
    <property type="entry name" value="Actin, alpha skeletal muscle"/>
    <property type="match status" value="1"/>
</dbReference>
<dbReference type="FunFam" id="3.90.640.10:FF:000047">
    <property type="entry name" value="Actin, alpha skeletal muscle"/>
    <property type="match status" value="1"/>
</dbReference>
<dbReference type="FunFam" id="3.30.420.40:FF:000058">
    <property type="entry name" value="Putative actin-related protein 5"/>
    <property type="match status" value="1"/>
</dbReference>
<dbReference type="Gene3D" id="3.30.420.40">
    <property type="match status" value="2"/>
</dbReference>
<dbReference type="Gene3D" id="3.90.640.10">
    <property type="entry name" value="Actin, Chain A, domain 4"/>
    <property type="match status" value="1"/>
</dbReference>
<dbReference type="InterPro" id="IPR004000">
    <property type="entry name" value="Actin"/>
</dbReference>
<dbReference type="InterPro" id="IPR020902">
    <property type="entry name" value="Actin/actin-like_CS"/>
</dbReference>
<dbReference type="InterPro" id="IPR004001">
    <property type="entry name" value="Actin_CS"/>
</dbReference>
<dbReference type="InterPro" id="IPR043129">
    <property type="entry name" value="ATPase_NBD"/>
</dbReference>
<dbReference type="PANTHER" id="PTHR11937">
    <property type="entry name" value="ACTIN"/>
    <property type="match status" value="1"/>
</dbReference>
<dbReference type="Pfam" id="PF00022">
    <property type="entry name" value="Actin"/>
    <property type="match status" value="1"/>
</dbReference>
<dbReference type="PRINTS" id="PR00190">
    <property type="entry name" value="ACTIN"/>
</dbReference>
<dbReference type="SMART" id="SM00268">
    <property type="entry name" value="ACTIN"/>
    <property type="match status" value="1"/>
</dbReference>
<dbReference type="SUPFAM" id="SSF53067">
    <property type="entry name" value="Actin-like ATPase domain"/>
    <property type="match status" value="2"/>
</dbReference>
<dbReference type="PROSITE" id="PS00406">
    <property type="entry name" value="ACTINS_1"/>
    <property type="match status" value="1"/>
</dbReference>
<dbReference type="PROSITE" id="PS00432">
    <property type="entry name" value="ACTINS_2"/>
    <property type="match status" value="1"/>
</dbReference>
<dbReference type="PROSITE" id="PS01132">
    <property type="entry name" value="ACTINS_ACT_LIKE"/>
    <property type="match status" value="1"/>
</dbReference>
<accession>P41340</accession>
<proteinExistence type="evidence at protein level"/>
<protein>
    <recommendedName>
        <fullName>Actin-3</fullName>
        <ecNumber evidence="2">3.6.4.-</ecNumber>
    </recommendedName>
</protein>
<organism>
    <name type="scientific">Limulus polyphemus</name>
    <name type="common">Atlantic horseshoe crab</name>
    <dbReference type="NCBI Taxonomy" id="6850"/>
    <lineage>
        <taxon>Eukaryota</taxon>
        <taxon>Metazoa</taxon>
        <taxon>Ecdysozoa</taxon>
        <taxon>Arthropoda</taxon>
        <taxon>Chelicerata</taxon>
        <taxon>Merostomata</taxon>
        <taxon>Xiphosura</taxon>
        <taxon>Limulidae</taxon>
        <taxon>Limulus</taxon>
    </lineage>
</organism>
<name>ACT3_LIMPO</name>
<reference key="1">
    <citation type="journal article" date="1995" name="J. Cell Biol.">
        <title>Sequence and domain organization of scruin, an actin-cross-linking protein in the acrosomal process of Limulus sperm.</title>
        <authorList>
            <person name="Way M."/>
            <person name="Sanders M."/>
            <person name="Garcia C."/>
            <person name="Sakai J."/>
            <person name="Matsudaira P."/>
        </authorList>
    </citation>
    <scope>NUCLEOTIDE SEQUENCE [MRNA]</scope>
    <source>
        <tissue>Testis</tissue>
    </source>
</reference>
<sequence length="376" mass="41808">MCDDEVAALVVDNGSGMCKAGFAGDDAPRAVFPSIVGRPRHQGVMVGMGQKDSYVGDEAQSKRGILTLKYPIEHGIVTNWDDMEKIWHHTFYNELRVAPEEHPVLLTEAPLNPKANREKMTQIMFETFNTPAMYVAIQAVLSLYASGRTTGIVLDSGDGVSHTVPIYEGYALPHAILRLDLAGRDLTDYLMKILTERGYSFTTTAEREIVRDIKEKLCYVALDFDQEMATAASSSSLEKSYELPDGQVITIGNERFRCPEALFQPSFLGMESSGIHETTYNSIMKCDIDIRKDLYANTVLSGGTTMYPGIADRMQKEITALAPSTMKIKIIAPPERKYSVWIGGSILASLSTFQQMWISKQEYDESGPSIVHRKCF</sequence>
<feature type="propeptide" id="PRO_0000000686" description="Removed in mature form" evidence="1">
    <location>
        <begin position="1"/>
        <end position="2"/>
    </location>
</feature>
<feature type="chain" id="PRO_0000000687" description="Actin-3">
    <location>
        <begin position="3"/>
        <end position="376"/>
    </location>
</feature>
<feature type="modified residue" description="N-acetylaspartate" evidence="1">
    <location>
        <position position="3"/>
    </location>
</feature>
<feature type="modified residue" description="Methionine sulfoxide" evidence="1">
    <location>
        <position position="45"/>
    </location>
</feature>
<feature type="modified residue" description="Methionine sulfoxide" evidence="1">
    <location>
        <position position="48"/>
    </location>
</feature>